<sequence length="524" mass="58755">MSSFSSEVQRRRTFAIISHPDAGKTTLTEKLLWFGGAIQVAGEVRGRKAARHATSDWMELEKQRGISVTSSVMQFPYREHMINLLDTPGHDDFSEDTYRTLTAVDSAVMVIDSVNGVEAQTIKLLNVCRMRDTPILTFINKLDRESRAPIELLDEIESTLGMQCAPMTWPIGMGKSFRGVYHLYNDTISFFDPHAEKGTAEIIQGLDNPRLDELIGAQADDLRVDVELVRGASNAFDKQAYLDGKQTPVFFGSAINNFGVQSLLDAVVELSPPPLPRNTASRVVEPTEEKFSGFVFKIQANMDPKHRDRIAFLRICSGRFERGMKIKQVATGKTLSVNNAITFMAQDRTTMDEAYSGDIIGIPNHGTVKLGDTFTEGENLKFIGIPSFAPEYFRRARIKNPMKMKQLQIGLKQLAEEGASQLFRPLLSNDLILGAIGLLQFDVVAHRLEHEYGVDVAFENYDCATARWLRGSDADLKAIADKYGFNVALDGNEEYVYLAPNRVNLQMAQERYPDIEFLETREIF</sequence>
<protein>
    <recommendedName>
        <fullName evidence="1">Peptide chain release factor 3</fullName>
        <shortName evidence="1">RF-3</shortName>
    </recommendedName>
</protein>
<proteinExistence type="inferred from homology"/>
<accession>Q1H0I2</accession>
<dbReference type="EMBL" id="CP000284">
    <property type="protein sequence ID" value="ABE50005.1"/>
    <property type="molecule type" value="Genomic_DNA"/>
</dbReference>
<dbReference type="RefSeq" id="WP_011479959.1">
    <property type="nucleotide sequence ID" value="NC_007947.1"/>
</dbReference>
<dbReference type="SMR" id="Q1H0I2"/>
<dbReference type="STRING" id="265072.Mfla_1737"/>
<dbReference type="KEGG" id="mfa:Mfla_1737"/>
<dbReference type="eggNOG" id="COG4108">
    <property type="taxonomic scope" value="Bacteria"/>
</dbReference>
<dbReference type="HOGENOM" id="CLU_002794_2_1_4"/>
<dbReference type="OrthoDB" id="9804431at2"/>
<dbReference type="Proteomes" id="UP000002440">
    <property type="component" value="Chromosome"/>
</dbReference>
<dbReference type="GO" id="GO:0005829">
    <property type="term" value="C:cytosol"/>
    <property type="evidence" value="ECO:0007669"/>
    <property type="project" value="TreeGrafter"/>
</dbReference>
<dbReference type="GO" id="GO:0005525">
    <property type="term" value="F:GTP binding"/>
    <property type="evidence" value="ECO:0007669"/>
    <property type="project" value="UniProtKB-UniRule"/>
</dbReference>
<dbReference type="GO" id="GO:0003924">
    <property type="term" value="F:GTPase activity"/>
    <property type="evidence" value="ECO:0007669"/>
    <property type="project" value="InterPro"/>
</dbReference>
<dbReference type="GO" id="GO:0016150">
    <property type="term" value="F:translation release factor activity, codon nonspecific"/>
    <property type="evidence" value="ECO:0007669"/>
    <property type="project" value="TreeGrafter"/>
</dbReference>
<dbReference type="GO" id="GO:0016149">
    <property type="term" value="F:translation release factor activity, codon specific"/>
    <property type="evidence" value="ECO:0007669"/>
    <property type="project" value="UniProtKB-UniRule"/>
</dbReference>
<dbReference type="GO" id="GO:0006449">
    <property type="term" value="P:regulation of translational termination"/>
    <property type="evidence" value="ECO:0007669"/>
    <property type="project" value="UniProtKB-UniRule"/>
</dbReference>
<dbReference type="CDD" id="cd04169">
    <property type="entry name" value="RF3"/>
    <property type="match status" value="1"/>
</dbReference>
<dbReference type="CDD" id="cd03689">
    <property type="entry name" value="RF3_II"/>
    <property type="match status" value="1"/>
</dbReference>
<dbReference type="CDD" id="cd16259">
    <property type="entry name" value="RF3_III"/>
    <property type="match status" value="1"/>
</dbReference>
<dbReference type="FunFam" id="2.40.30.10:FF:000040">
    <property type="entry name" value="Peptide chain release factor 3"/>
    <property type="match status" value="1"/>
</dbReference>
<dbReference type="FunFam" id="3.30.70.3280:FF:000001">
    <property type="entry name" value="Peptide chain release factor 3"/>
    <property type="match status" value="1"/>
</dbReference>
<dbReference type="FunFam" id="3.40.50.300:FF:000542">
    <property type="entry name" value="Peptide chain release factor 3"/>
    <property type="match status" value="1"/>
</dbReference>
<dbReference type="Gene3D" id="3.40.50.300">
    <property type="entry name" value="P-loop containing nucleotide triphosphate hydrolases"/>
    <property type="match status" value="2"/>
</dbReference>
<dbReference type="Gene3D" id="3.30.70.3280">
    <property type="entry name" value="Peptide chain release factor 3, domain III"/>
    <property type="match status" value="1"/>
</dbReference>
<dbReference type="HAMAP" id="MF_00072">
    <property type="entry name" value="Rel_fac_3"/>
    <property type="match status" value="1"/>
</dbReference>
<dbReference type="InterPro" id="IPR053905">
    <property type="entry name" value="EF-G-like_DII"/>
</dbReference>
<dbReference type="InterPro" id="IPR035647">
    <property type="entry name" value="EFG_III/V"/>
</dbReference>
<dbReference type="InterPro" id="IPR031157">
    <property type="entry name" value="G_TR_CS"/>
</dbReference>
<dbReference type="InterPro" id="IPR027417">
    <property type="entry name" value="P-loop_NTPase"/>
</dbReference>
<dbReference type="InterPro" id="IPR004548">
    <property type="entry name" value="PrfC"/>
</dbReference>
<dbReference type="InterPro" id="IPR032090">
    <property type="entry name" value="RF3_C"/>
</dbReference>
<dbReference type="InterPro" id="IPR038467">
    <property type="entry name" value="RF3_dom_3_sf"/>
</dbReference>
<dbReference type="InterPro" id="IPR041732">
    <property type="entry name" value="RF3_GTP-bd"/>
</dbReference>
<dbReference type="InterPro" id="IPR005225">
    <property type="entry name" value="Small_GTP-bd"/>
</dbReference>
<dbReference type="InterPro" id="IPR000795">
    <property type="entry name" value="T_Tr_GTP-bd_dom"/>
</dbReference>
<dbReference type="InterPro" id="IPR009000">
    <property type="entry name" value="Transl_B-barrel_sf"/>
</dbReference>
<dbReference type="NCBIfam" id="TIGR00503">
    <property type="entry name" value="prfC"/>
    <property type="match status" value="1"/>
</dbReference>
<dbReference type="NCBIfam" id="NF001964">
    <property type="entry name" value="PRK00741.1"/>
    <property type="match status" value="1"/>
</dbReference>
<dbReference type="NCBIfam" id="TIGR00231">
    <property type="entry name" value="small_GTP"/>
    <property type="match status" value="1"/>
</dbReference>
<dbReference type="PANTHER" id="PTHR43556">
    <property type="entry name" value="PEPTIDE CHAIN RELEASE FACTOR RF3"/>
    <property type="match status" value="1"/>
</dbReference>
<dbReference type="PANTHER" id="PTHR43556:SF2">
    <property type="entry name" value="PEPTIDE CHAIN RELEASE FACTOR RF3"/>
    <property type="match status" value="1"/>
</dbReference>
<dbReference type="Pfam" id="PF22042">
    <property type="entry name" value="EF-G_D2"/>
    <property type="match status" value="1"/>
</dbReference>
<dbReference type="Pfam" id="PF00009">
    <property type="entry name" value="GTP_EFTU"/>
    <property type="match status" value="1"/>
</dbReference>
<dbReference type="Pfam" id="PF16658">
    <property type="entry name" value="RF3_C"/>
    <property type="match status" value="1"/>
</dbReference>
<dbReference type="PRINTS" id="PR00315">
    <property type="entry name" value="ELONGATNFCT"/>
</dbReference>
<dbReference type="SUPFAM" id="SSF54980">
    <property type="entry name" value="EF-G C-terminal domain-like"/>
    <property type="match status" value="1"/>
</dbReference>
<dbReference type="SUPFAM" id="SSF52540">
    <property type="entry name" value="P-loop containing nucleoside triphosphate hydrolases"/>
    <property type="match status" value="1"/>
</dbReference>
<dbReference type="SUPFAM" id="SSF50447">
    <property type="entry name" value="Translation proteins"/>
    <property type="match status" value="1"/>
</dbReference>
<dbReference type="PROSITE" id="PS00301">
    <property type="entry name" value="G_TR_1"/>
    <property type="match status" value="1"/>
</dbReference>
<dbReference type="PROSITE" id="PS51722">
    <property type="entry name" value="G_TR_2"/>
    <property type="match status" value="1"/>
</dbReference>
<gene>
    <name evidence="1" type="primary">prfC</name>
    <name type="ordered locus">Mfla_1737</name>
</gene>
<name>RF3_METFK</name>
<feature type="chain" id="PRO_1000023661" description="Peptide chain release factor 3">
    <location>
        <begin position="1"/>
        <end position="524"/>
    </location>
</feature>
<feature type="domain" description="tr-type G">
    <location>
        <begin position="9"/>
        <end position="275"/>
    </location>
</feature>
<feature type="binding site" evidence="1">
    <location>
        <begin position="18"/>
        <end position="25"/>
    </location>
    <ligand>
        <name>GTP</name>
        <dbReference type="ChEBI" id="CHEBI:37565"/>
    </ligand>
</feature>
<feature type="binding site" evidence="1">
    <location>
        <begin position="86"/>
        <end position="90"/>
    </location>
    <ligand>
        <name>GTP</name>
        <dbReference type="ChEBI" id="CHEBI:37565"/>
    </ligand>
</feature>
<feature type="binding site" evidence="1">
    <location>
        <begin position="140"/>
        <end position="143"/>
    </location>
    <ligand>
        <name>GTP</name>
        <dbReference type="ChEBI" id="CHEBI:37565"/>
    </ligand>
</feature>
<reference key="1">
    <citation type="submission" date="2006-03" db="EMBL/GenBank/DDBJ databases">
        <title>Complete sequence of Methylobacillus flagellatus KT.</title>
        <authorList>
            <consortium name="US DOE Joint Genome Institute"/>
            <person name="Copeland A."/>
            <person name="Lucas S."/>
            <person name="Lapidus A."/>
            <person name="Barry K."/>
            <person name="Detter J.C."/>
            <person name="Glavina del Rio T."/>
            <person name="Hammon N."/>
            <person name="Israni S."/>
            <person name="Dalin E."/>
            <person name="Tice H."/>
            <person name="Pitluck S."/>
            <person name="Brettin T."/>
            <person name="Bruce D."/>
            <person name="Han C."/>
            <person name="Tapia R."/>
            <person name="Saunders E."/>
            <person name="Gilna P."/>
            <person name="Schmutz J."/>
            <person name="Larimer F."/>
            <person name="Land M."/>
            <person name="Kyrpides N."/>
            <person name="Anderson I."/>
            <person name="Richardson P."/>
        </authorList>
    </citation>
    <scope>NUCLEOTIDE SEQUENCE [LARGE SCALE GENOMIC DNA]</scope>
    <source>
        <strain>ATCC 51484 / DSM 6875 / VKM B-1610 / KT</strain>
    </source>
</reference>
<comment type="function">
    <text evidence="1">Increases the formation of ribosomal termination complexes and stimulates activities of RF-1 and RF-2. It binds guanine nucleotides and has strong preference for UGA stop codons. It may interact directly with the ribosome. The stimulation of RF-1 and RF-2 is significantly reduced by GTP and GDP, but not by GMP.</text>
</comment>
<comment type="subcellular location">
    <subcellularLocation>
        <location evidence="1">Cytoplasm</location>
    </subcellularLocation>
</comment>
<comment type="similarity">
    <text evidence="1">Belongs to the TRAFAC class translation factor GTPase superfamily. Classic translation factor GTPase family. PrfC subfamily.</text>
</comment>
<keyword id="KW-0963">Cytoplasm</keyword>
<keyword id="KW-0342">GTP-binding</keyword>
<keyword id="KW-0547">Nucleotide-binding</keyword>
<keyword id="KW-0648">Protein biosynthesis</keyword>
<keyword id="KW-1185">Reference proteome</keyword>
<organism>
    <name type="scientific">Methylobacillus flagellatus (strain ATCC 51484 / DSM 6875 / VKM B-1610 / KT)</name>
    <dbReference type="NCBI Taxonomy" id="265072"/>
    <lineage>
        <taxon>Bacteria</taxon>
        <taxon>Pseudomonadati</taxon>
        <taxon>Pseudomonadota</taxon>
        <taxon>Betaproteobacteria</taxon>
        <taxon>Nitrosomonadales</taxon>
        <taxon>Methylophilaceae</taxon>
        <taxon>Methylobacillus</taxon>
    </lineage>
</organism>
<evidence type="ECO:0000255" key="1">
    <source>
        <dbReference type="HAMAP-Rule" id="MF_00072"/>
    </source>
</evidence>